<accession>P14509</accession>
<name>KKA8_ECOLX</name>
<protein>
    <recommendedName>
        <fullName>Aminoglycoside 3'-phosphotransferase</fullName>
        <ecNumber>2.7.1.95</ecNumber>
    </recommendedName>
    <alternativeName>
        <fullName>APH(3')VIII</fullName>
    </alternativeName>
    <alternativeName>
        <fullName>Kanamycin kinase, type VIII</fullName>
    </alternativeName>
    <alternativeName>
        <fullName>Neomycin-kanamycin phosphotransferase type VIII</fullName>
    </alternativeName>
</protein>
<sequence>MNDIDREEPCAAAAVPESMAAHVMGYKWARDKVGQSGCAVYRLHSKSGGSDLFLKHGKDAFADDVTDEMVRLRWLAGHISVPSVVSFVRTPNQAWLLTTAIHGKTAYQVLKSDFGARLVVVDALAAFMRRLHAIPVSECSVQQWTTHAGLPERGSIEAGVVDVDDFDKEREGWTAEQVWEAMHRLLPLAPDPVVTHGDFSLDNLLIVEGKVVGCIDVGRAGIADRYQDLAVLWNCLEEFEPSLQERLVAQYGIADPDRRKLQFHLLLDELF</sequence>
<reference key="1">
    <citation type="journal article" date="1987" name="Plasmid">
        <title>Nucleotide sequence of the kanamycin resistance determinant of plasmid RP4: homology to other aminoglycoside 3'-phosphotransferases.</title>
        <authorList>
            <person name="Pansegrau W."/>
            <person name="Miele L."/>
            <person name="Lurz R."/>
            <person name="Lanka E."/>
        </authorList>
    </citation>
    <scope>NUCLEOTIDE SEQUENCE [GENOMIC DNA]</scope>
</reference>
<dbReference type="EC" id="2.7.1.95"/>
<dbReference type="EMBL" id="M20305">
    <property type="protein sequence ID" value="AAA26412.1"/>
    <property type="molecule type" value="Genomic_DNA"/>
</dbReference>
<dbReference type="PIR" id="JU0103">
    <property type="entry name" value="JU0103"/>
</dbReference>
<dbReference type="SMR" id="P14509"/>
<dbReference type="IntAct" id="P14509">
    <property type="interactions" value="1"/>
</dbReference>
<dbReference type="CARD" id="ARO:3002642">
    <property type="molecule name" value="APH(3')-Ib"/>
    <property type="mechanism identifier" value="ARO:0001004"/>
    <property type="mechanism name" value="antibiotic inactivation"/>
</dbReference>
<dbReference type="KEGG" id="ag:AAA26412"/>
<dbReference type="GO" id="GO:0005524">
    <property type="term" value="F:ATP binding"/>
    <property type="evidence" value="ECO:0007669"/>
    <property type="project" value="UniProtKB-KW"/>
</dbReference>
<dbReference type="GO" id="GO:0008910">
    <property type="term" value="F:kanamycin kinase activity"/>
    <property type="evidence" value="ECO:0007669"/>
    <property type="project" value="UniProtKB-EC"/>
</dbReference>
<dbReference type="GO" id="GO:0046677">
    <property type="term" value="P:response to antibiotic"/>
    <property type="evidence" value="ECO:0007669"/>
    <property type="project" value="UniProtKB-KW"/>
</dbReference>
<dbReference type="CDD" id="cd05150">
    <property type="entry name" value="APH"/>
    <property type="match status" value="1"/>
</dbReference>
<dbReference type="Gene3D" id="3.90.1200.10">
    <property type="match status" value="1"/>
</dbReference>
<dbReference type="Gene3D" id="3.30.200.20">
    <property type="entry name" value="Phosphorylase Kinase, domain 1"/>
    <property type="match status" value="1"/>
</dbReference>
<dbReference type="InterPro" id="IPR051678">
    <property type="entry name" value="AGP_Transferase"/>
</dbReference>
<dbReference type="InterPro" id="IPR002575">
    <property type="entry name" value="Aminoglycoside_PTrfase"/>
</dbReference>
<dbReference type="InterPro" id="IPR024165">
    <property type="entry name" value="Kan/Strep_kinase"/>
</dbReference>
<dbReference type="InterPro" id="IPR011009">
    <property type="entry name" value="Kinase-like_dom_sf"/>
</dbReference>
<dbReference type="NCBIfam" id="NF033068">
    <property type="entry name" value="APH_3p"/>
    <property type="match status" value="1"/>
</dbReference>
<dbReference type="NCBIfam" id="NF033059">
    <property type="entry name" value="APH_3p_I"/>
    <property type="match status" value="1"/>
</dbReference>
<dbReference type="PANTHER" id="PTHR21310:SF41">
    <property type="entry name" value="3'-PHOSPHOTRANSFERASE, PUTATIVE-RELATED"/>
    <property type="match status" value="1"/>
</dbReference>
<dbReference type="PANTHER" id="PTHR21310">
    <property type="entry name" value="AMINOGLYCOSIDE PHOSPHOTRANSFERASE-RELATED-RELATED"/>
    <property type="match status" value="1"/>
</dbReference>
<dbReference type="Pfam" id="PF01636">
    <property type="entry name" value="APH"/>
    <property type="match status" value="1"/>
</dbReference>
<dbReference type="PIRSF" id="PIRSF000706">
    <property type="entry name" value="Kanamycin_kin"/>
    <property type="match status" value="1"/>
</dbReference>
<dbReference type="SUPFAM" id="SSF56112">
    <property type="entry name" value="Protein kinase-like (PK-like)"/>
    <property type="match status" value="1"/>
</dbReference>
<comment type="function">
    <text>Resistance to kanamycin and structurally-related aminoglycosides, including amikacin.</text>
</comment>
<comment type="catalytic activity">
    <reaction>
        <text>kanamycin A + ATP = kanamycin 3'-phosphate + ADP + H(+)</text>
        <dbReference type="Rhea" id="RHEA:24256"/>
        <dbReference type="ChEBI" id="CHEBI:15378"/>
        <dbReference type="ChEBI" id="CHEBI:30616"/>
        <dbReference type="ChEBI" id="CHEBI:57909"/>
        <dbReference type="ChEBI" id="CHEBI:58214"/>
        <dbReference type="ChEBI" id="CHEBI:456216"/>
        <dbReference type="EC" id="2.7.1.95"/>
    </reaction>
</comment>
<comment type="similarity">
    <text evidence="2">Belongs to the aminoglycoside phosphotransferase family.</text>
</comment>
<proteinExistence type="inferred from homology"/>
<organism>
    <name type="scientific">Escherichia coli</name>
    <dbReference type="NCBI Taxonomy" id="562"/>
    <lineage>
        <taxon>Bacteria</taxon>
        <taxon>Pseudomonadati</taxon>
        <taxon>Pseudomonadota</taxon>
        <taxon>Gammaproteobacteria</taxon>
        <taxon>Enterobacterales</taxon>
        <taxon>Enterobacteriaceae</taxon>
        <taxon>Escherichia</taxon>
    </lineage>
</organism>
<geneLocation type="plasmid">
    <name>IncP-alpha RP4</name>
</geneLocation>
<keyword id="KW-0046">Antibiotic resistance</keyword>
<keyword id="KW-0067">ATP-binding</keyword>
<keyword id="KW-0418">Kinase</keyword>
<keyword id="KW-0547">Nucleotide-binding</keyword>
<keyword id="KW-0614">Plasmid</keyword>
<keyword id="KW-0808">Transferase</keyword>
<feature type="chain" id="PRO_0000204811" description="Aminoglycoside 3'-phosphotransferase">
    <location>
        <begin position="1"/>
        <end position="271"/>
    </location>
</feature>
<feature type="active site" description="Proton acceptor" evidence="1">
    <location>
        <position position="198"/>
    </location>
</feature>
<evidence type="ECO:0000250" key="1"/>
<evidence type="ECO:0000305" key="2"/>
<gene>
    <name type="primary">aphA</name>
</gene>